<reference key="1">
    <citation type="journal article" date="2004" name="Genome Res.">
        <title>The status, quality, and expansion of the NIH full-length cDNA project: the Mammalian Gene Collection (MGC).</title>
        <authorList>
            <consortium name="The MGC Project Team"/>
        </authorList>
    </citation>
    <scope>NUCLEOTIDE SEQUENCE [LARGE SCALE MRNA]</scope>
    <source>
        <tissue>Prostate</tissue>
    </source>
</reference>
<evidence type="ECO:0000250" key="1">
    <source>
        <dbReference type="UniProtKB" id="Q6PIX5"/>
    </source>
</evidence>
<evidence type="ECO:0000250" key="2">
    <source>
        <dbReference type="UniProtKB" id="Q96CC6"/>
    </source>
</evidence>
<evidence type="ECO:0000255" key="3"/>
<evidence type="ECO:0000256" key="4">
    <source>
        <dbReference type="SAM" id="MobiDB-lite"/>
    </source>
</evidence>
<evidence type="ECO:0000305" key="5"/>
<feature type="chain" id="PRO_0000340110" description="Inactive rhomboid protein 1">
    <location>
        <begin position="1"/>
        <end position="856"/>
    </location>
</feature>
<feature type="topological domain" description="Cytoplasmic" evidence="3">
    <location>
        <begin position="1"/>
        <end position="412"/>
    </location>
</feature>
<feature type="transmembrane region" description="Helical" evidence="3">
    <location>
        <begin position="413"/>
        <end position="433"/>
    </location>
</feature>
<feature type="topological domain" description="Lumenal" evidence="3">
    <location>
        <begin position="434"/>
        <end position="656"/>
    </location>
</feature>
<feature type="transmembrane region" description="Helical" evidence="3">
    <location>
        <begin position="657"/>
        <end position="677"/>
    </location>
</feature>
<feature type="topological domain" description="Cytoplasmic" evidence="3">
    <location>
        <begin position="678"/>
        <end position="692"/>
    </location>
</feature>
<feature type="transmembrane region" description="Helical" evidence="3">
    <location>
        <begin position="693"/>
        <end position="713"/>
    </location>
</feature>
<feature type="topological domain" description="Lumenal" evidence="3">
    <location>
        <begin position="714"/>
        <end position="715"/>
    </location>
</feature>
<feature type="transmembrane region" description="Helical" evidence="3">
    <location>
        <begin position="716"/>
        <end position="736"/>
    </location>
</feature>
<feature type="topological domain" description="Cytoplasmic" evidence="3">
    <location>
        <begin position="737"/>
        <end position="747"/>
    </location>
</feature>
<feature type="transmembrane region" description="Helical" evidence="3">
    <location>
        <begin position="748"/>
        <end position="768"/>
    </location>
</feature>
<feature type="topological domain" description="Lumenal" evidence="3">
    <location>
        <begin position="769"/>
        <end position="773"/>
    </location>
</feature>
<feature type="transmembrane region" description="Helical" evidence="3">
    <location>
        <begin position="774"/>
        <end position="794"/>
    </location>
</feature>
<feature type="topological domain" description="Cytoplasmic" evidence="3">
    <location>
        <begin position="795"/>
        <end position="804"/>
    </location>
</feature>
<feature type="transmembrane region" description="Helical" evidence="3">
    <location>
        <begin position="805"/>
        <end position="825"/>
    </location>
</feature>
<feature type="topological domain" description="Lumenal" evidence="3">
    <location>
        <begin position="826"/>
        <end position="856"/>
    </location>
</feature>
<feature type="region of interest" description="Disordered" evidence="4">
    <location>
        <begin position="1"/>
        <end position="20"/>
    </location>
</feature>
<feature type="modified residue" description="Phosphoserine" evidence="2">
    <location>
        <position position="76"/>
    </location>
</feature>
<feature type="modified residue" description="Phosphoserine" evidence="1">
    <location>
        <position position="176"/>
    </location>
</feature>
<feature type="modified residue" description="Phosphothreonine" evidence="1">
    <location>
        <position position="180"/>
    </location>
</feature>
<feature type="modified residue" description="Phosphothreonine" evidence="1">
    <location>
        <position position="183"/>
    </location>
</feature>
<feature type="modified residue" description="Phosphoserine" evidence="2">
    <location>
        <position position="391"/>
    </location>
</feature>
<feature type="glycosylation site" description="N-linked (GlcNAc...) asparagine" evidence="3">
    <location>
        <position position="584"/>
    </location>
</feature>
<protein>
    <recommendedName>
        <fullName>Inactive rhomboid protein 1</fullName>
        <shortName>iRhom1</shortName>
    </recommendedName>
    <alternativeName>
        <fullName>Rhomboid family member 1</fullName>
    </alternativeName>
</protein>
<name>RHDF1_RAT</name>
<gene>
    <name type="primary">Rhbdf1</name>
</gene>
<comment type="function">
    <text evidence="2">Regulates ADAM17 protease, a sheddase of the epidermal growth factor (EGF) receptor ligands and TNF, thereby plays a role in sleep, cell survival, proliferation, migration and inflammation. Does not exhibit any protease activity on its own.</text>
</comment>
<comment type="subunit">
    <text evidence="2">Homodimer, or homooligomer. Interacts with TGFA and HBEGF. Interacts with EGF; may retain EGF in the endoplasmic reticulum and regulates its degradation through the endoplasmic reticulum-associated degradation (ERAD). Interacts (via cytoplasmic N-terminus) with FRMD8/iTAP; this interaction leads to mutual protein stabilization. Interacts with ADAM17/TACE.</text>
</comment>
<comment type="subcellular location">
    <subcellularLocation>
        <location evidence="2">Endoplasmic reticulum membrane</location>
        <topology evidence="3">Multi-pass membrane protein</topology>
    </subcellularLocation>
    <subcellularLocation>
        <location evidence="2">Golgi apparatus membrane</location>
        <topology evidence="3">Multi-pass membrane protein</topology>
    </subcellularLocation>
    <text evidence="2">Predominantly localized in the endoplasmic reticulum membrane.</text>
</comment>
<comment type="similarity">
    <text evidence="5">Belongs to the peptidase S54 family.</text>
</comment>
<keyword id="KW-0256">Endoplasmic reticulum</keyword>
<keyword id="KW-0325">Glycoprotein</keyword>
<keyword id="KW-0333">Golgi apparatus</keyword>
<keyword id="KW-0340">Growth factor binding</keyword>
<keyword id="KW-0472">Membrane</keyword>
<keyword id="KW-0597">Phosphoprotein</keyword>
<keyword id="KW-0653">Protein transport</keyword>
<keyword id="KW-1185">Reference proteome</keyword>
<keyword id="KW-0812">Transmembrane</keyword>
<keyword id="KW-1133">Transmembrane helix</keyword>
<keyword id="KW-0813">Transport</keyword>
<dbReference type="EMBL" id="BC099777">
    <property type="protein sequence ID" value="AAH99777.1"/>
    <property type="molecule type" value="mRNA"/>
</dbReference>
<dbReference type="RefSeq" id="NP_001025205.1">
    <property type="nucleotide sequence ID" value="NM_001030034.2"/>
</dbReference>
<dbReference type="RefSeq" id="XP_008765802.1">
    <property type="nucleotide sequence ID" value="XM_008767580.1"/>
</dbReference>
<dbReference type="RefSeq" id="XP_017452723.1">
    <property type="nucleotide sequence ID" value="XM_017597234.1"/>
</dbReference>
<dbReference type="RefSeq" id="XP_017452724.1">
    <property type="nucleotide sequence ID" value="XM_017597235.1"/>
</dbReference>
<dbReference type="RefSeq" id="XP_063125018.1">
    <property type="nucleotide sequence ID" value="XM_063268948.1"/>
</dbReference>
<dbReference type="RefSeq" id="XP_063125019.1">
    <property type="nucleotide sequence ID" value="XM_063268949.1"/>
</dbReference>
<dbReference type="RefSeq" id="XP_063125020.1">
    <property type="nucleotide sequence ID" value="XM_063268950.1"/>
</dbReference>
<dbReference type="RefSeq" id="XP_063125021.1">
    <property type="nucleotide sequence ID" value="XM_063268951.1"/>
</dbReference>
<dbReference type="SMR" id="Q499S9"/>
<dbReference type="FunCoup" id="Q499S9">
    <property type="interactions" value="600"/>
</dbReference>
<dbReference type="STRING" id="10116.ENSRNOP00000027965"/>
<dbReference type="GlyCosmos" id="Q499S9">
    <property type="glycosylation" value="1 site, No reported glycans"/>
</dbReference>
<dbReference type="GlyGen" id="Q499S9">
    <property type="glycosylation" value="2 sites"/>
</dbReference>
<dbReference type="iPTMnet" id="Q499S9"/>
<dbReference type="PhosphoSitePlus" id="Q499S9"/>
<dbReference type="PaxDb" id="10116-ENSRNOP00000027965"/>
<dbReference type="Ensembl" id="ENSRNOT00000027965.5">
    <property type="protein sequence ID" value="ENSRNOP00000027965.3"/>
    <property type="gene ID" value="ENSRNOG00000020594.6"/>
</dbReference>
<dbReference type="GeneID" id="303008"/>
<dbReference type="KEGG" id="rno:303008"/>
<dbReference type="UCSC" id="RGD:1305075">
    <property type="organism name" value="rat"/>
</dbReference>
<dbReference type="AGR" id="RGD:1305075"/>
<dbReference type="CTD" id="64285"/>
<dbReference type="RGD" id="1305075">
    <property type="gene designation" value="Rhbdf1"/>
</dbReference>
<dbReference type="eggNOG" id="KOG2290">
    <property type="taxonomic scope" value="Eukaryota"/>
</dbReference>
<dbReference type="GeneTree" id="ENSGT00940000156278"/>
<dbReference type="HOGENOM" id="CLU_011531_1_1_1"/>
<dbReference type="InParanoid" id="Q499S9"/>
<dbReference type="OMA" id="GGTENMA"/>
<dbReference type="PhylomeDB" id="Q499S9"/>
<dbReference type="TreeFam" id="TF312988"/>
<dbReference type="PRO" id="PR:Q499S9"/>
<dbReference type="Proteomes" id="UP000002494">
    <property type="component" value="Chromosome 10"/>
</dbReference>
<dbReference type="Bgee" id="ENSRNOG00000020594">
    <property type="expression patterns" value="Expressed in esophagus and 18 other cell types or tissues"/>
</dbReference>
<dbReference type="GO" id="GO:0005789">
    <property type="term" value="C:endoplasmic reticulum membrane"/>
    <property type="evidence" value="ECO:0000250"/>
    <property type="project" value="UniProtKB"/>
</dbReference>
<dbReference type="GO" id="GO:0000139">
    <property type="term" value="C:Golgi membrane"/>
    <property type="evidence" value="ECO:0000250"/>
    <property type="project" value="UniProtKB"/>
</dbReference>
<dbReference type="GO" id="GO:0019838">
    <property type="term" value="F:growth factor binding"/>
    <property type="evidence" value="ECO:0007669"/>
    <property type="project" value="UniProtKB-KW"/>
</dbReference>
<dbReference type="GO" id="GO:0016477">
    <property type="term" value="P:cell migration"/>
    <property type="evidence" value="ECO:0000250"/>
    <property type="project" value="UniProtKB"/>
</dbReference>
<dbReference type="GO" id="GO:0008283">
    <property type="term" value="P:cell population proliferation"/>
    <property type="evidence" value="ECO:0000250"/>
    <property type="project" value="UniProtKB"/>
</dbReference>
<dbReference type="GO" id="GO:0050709">
    <property type="term" value="P:negative regulation of protein secretion"/>
    <property type="evidence" value="ECO:0000250"/>
    <property type="project" value="UniProtKB"/>
</dbReference>
<dbReference type="GO" id="GO:0015031">
    <property type="term" value="P:protein transport"/>
    <property type="evidence" value="ECO:0007669"/>
    <property type="project" value="UniProtKB-KW"/>
</dbReference>
<dbReference type="GO" id="GO:0042058">
    <property type="term" value="P:regulation of epidermal growth factor receptor signaling pathway"/>
    <property type="evidence" value="ECO:0000250"/>
    <property type="project" value="UniProtKB"/>
</dbReference>
<dbReference type="GO" id="GO:0061136">
    <property type="term" value="P:regulation of proteasomal protein catabolic process"/>
    <property type="evidence" value="ECO:0000250"/>
    <property type="project" value="UniProtKB"/>
</dbReference>
<dbReference type="GO" id="GO:0050708">
    <property type="term" value="P:regulation of protein secretion"/>
    <property type="evidence" value="ECO:0000266"/>
    <property type="project" value="RGD"/>
</dbReference>
<dbReference type="FunFam" id="1.20.1540.10:FF:000001">
    <property type="entry name" value="Putative inactive rhomboid protein 1"/>
    <property type="match status" value="1"/>
</dbReference>
<dbReference type="Gene3D" id="1.20.1540.10">
    <property type="entry name" value="Rhomboid-like"/>
    <property type="match status" value="1"/>
</dbReference>
<dbReference type="InterPro" id="IPR051512">
    <property type="entry name" value="Inactive_Rhomboid"/>
</dbReference>
<dbReference type="InterPro" id="IPR022241">
    <property type="entry name" value="iRhom1_2_N"/>
</dbReference>
<dbReference type="InterPro" id="IPR022764">
    <property type="entry name" value="Peptidase_S54_rhomboid_dom"/>
</dbReference>
<dbReference type="InterPro" id="IPR035952">
    <property type="entry name" value="Rhomboid-like_sf"/>
</dbReference>
<dbReference type="PANTHER" id="PTHR45965">
    <property type="entry name" value="INACTIVE RHOMBOID PROTEIN"/>
    <property type="match status" value="1"/>
</dbReference>
<dbReference type="PANTHER" id="PTHR45965:SF4">
    <property type="entry name" value="INACTIVE RHOMBOID PROTEIN 1"/>
    <property type="match status" value="1"/>
</dbReference>
<dbReference type="Pfam" id="PF12595">
    <property type="entry name" value="iRhom1-2_N"/>
    <property type="match status" value="1"/>
</dbReference>
<dbReference type="Pfam" id="PF01694">
    <property type="entry name" value="Rhomboid"/>
    <property type="match status" value="1"/>
</dbReference>
<dbReference type="SUPFAM" id="SSF144091">
    <property type="entry name" value="Rhomboid-like"/>
    <property type="match status" value="1"/>
</dbReference>
<sequence>MSEARRDSTSSLQRKKPPWLKLDIPAVVPPAAEEPSFLQPLRRQAFLRSVSMPAETARVPSPHHEPRRLALQRQTSITQTIRRGTADWFGVSKDSDSTQKWQRKSIRHCSQRYGKLKPQVIRELDLPSQDNVSLTSTETPPPLYVGPCQLGMQKIIDPLARGRAFRMADDTADGLSAPHTPVTPGAASLCSFSSSRSGFNRLPRRRKRESVAKMSFRAAAALVKGRSIRDGTLRRGQRRSFTPASFLEEDMVDFPDELDTSFFAREGVLHEELSTYPDEVFESPSEAALKDWEKAPDQADLTGGALDRSELERSHLMLPLERGWRKQKEGGTLAPQPKVRLRQEVVSAAGPRRGQRIAVPVRKLFAREKRPYGLGMVGRLTNRTYRKRIDSYVKRQIEDMDDHRPFFTYWLTFVHSLVTILAVCIYGIAPVGFSQHETVDSVLRKRGVYENVKYVQQENFWIGPSSEALIHLGAKFSPCMRQDPQVHNFILAAREREKHSACCVRNDRSGCVQTSKEECSSTLAVWVKWPVHPSAPDLAGNKRQFGSVCHQDPRVCDEPSSEDPHEWPEDITKWPICTKNSAGNHTNHPHMDCVITGRPCCIGTKGRCEITSREYCDFMKGYFHEEATLCSQVHCMDDVCGLLPFLNPEVPDQFYRLWLSLFLHAGILHCLVSVCFQMTVLRDLEKLAGWHRIAIIYLLSGVTGNLASAIFLPYRAEVGPAGSQFGILACLFVELFQSWQILARPWRAFFKLLAVVLFLFAFGLLPWIDNFAHISGFVSGLFLSFAFLPYISFGKFDLYRKRCQIIIFQAVFLGLLAGLVVLFYFYPVRCEWCEFLTCIPFTDKFCEKYELDAQLH</sequence>
<organism>
    <name type="scientific">Rattus norvegicus</name>
    <name type="common">Rat</name>
    <dbReference type="NCBI Taxonomy" id="10116"/>
    <lineage>
        <taxon>Eukaryota</taxon>
        <taxon>Metazoa</taxon>
        <taxon>Chordata</taxon>
        <taxon>Craniata</taxon>
        <taxon>Vertebrata</taxon>
        <taxon>Euteleostomi</taxon>
        <taxon>Mammalia</taxon>
        <taxon>Eutheria</taxon>
        <taxon>Euarchontoglires</taxon>
        <taxon>Glires</taxon>
        <taxon>Rodentia</taxon>
        <taxon>Myomorpha</taxon>
        <taxon>Muroidea</taxon>
        <taxon>Muridae</taxon>
        <taxon>Murinae</taxon>
        <taxon>Rattus</taxon>
    </lineage>
</organism>
<accession>Q499S9</accession>
<proteinExistence type="evidence at transcript level"/>